<organism>
    <name type="scientific">Bremia lactucae</name>
    <name type="common">Lettuce downy mildew</name>
    <dbReference type="NCBI Taxonomy" id="4779"/>
    <lineage>
        <taxon>Eukaryota</taxon>
        <taxon>Sar</taxon>
        <taxon>Stramenopiles</taxon>
        <taxon>Oomycota</taxon>
        <taxon>Peronosporales</taxon>
        <taxon>Peronosporaceae</taxon>
        <taxon>Bremia</taxon>
    </lineage>
</organism>
<reference key="1">
    <citation type="journal article" date="2013" name="Mol. Plant Microbe Interact.">
        <title>Specific in planta recognition of two GKLR proteins of the downy mildew Bremia lactucae revealed in a large effector screen in lettuce.</title>
        <authorList>
            <person name="Stassen J.H."/>
            <person name="den Boer E."/>
            <person name="Vergeer P.W."/>
            <person name="Andel A."/>
            <person name="Ellendorff U."/>
            <person name="Pelgrom K."/>
            <person name="Pel M."/>
            <person name="Schut J."/>
            <person name="Zonneveld O."/>
            <person name="Jeuken M.J."/>
            <person name="Van den Ackerveken G."/>
        </authorList>
    </citation>
    <scope>NUCLEOTIDE SEQUENCE [MRNA]</scope>
    <scope>DOMAIN</scope>
</reference>
<reference key="2">
    <citation type="journal article" date="2019" name="Plant J.">
        <title>Multiple downy mildew effectors target the stress-related NAC transcription factor LsNAC069 in lettuce.</title>
        <authorList>
            <person name="Meisrimler C.N."/>
            <person name="Pelgrom A.J.E."/>
            <person name="Oud B."/>
            <person name="Out S."/>
            <person name="Van den Ackerveken G."/>
        </authorList>
    </citation>
    <scope>INTERACTION WITH NAC069</scope>
    <scope>SUBCELLULAR LOCATION</scope>
    <scope>FUNCTION</scope>
</reference>
<gene>
    <name evidence="3" type="primary">BLR05</name>
</gene>
<protein>
    <recommendedName>
        <fullName evidence="3">Secreted RxLR effector protein BLR05</fullName>
    </recommendedName>
</protein>
<name>BRL05_BRELC</name>
<feature type="signal peptide" evidence="1">
    <location>
        <begin position="1"/>
        <end position="21"/>
    </location>
</feature>
<feature type="chain" id="PRO_0000447898" description="Secreted RxLR effector protein BLR05">
    <location>
        <begin position="22"/>
        <end position="97"/>
    </location>
</feature>
<feature type="transmembrane region" description="Helical" evidence="1">
    <location>
        <begin position="69"/>
        <end position="89"/>
    </location>
</feature>
<feature type="short sequence motif" description="RxLR-dEER" evidence="5">
    <location>
        <begin position="32"/>
        <end position="60"/>
    </location>
</feature>
<proteinExistence type="evidence at protein level"/>
<comment type="function">
    <text evidence="2">Secreted effector that inhibits stress-induced relocalization of the transcription factor NAC069 to the nucleus, thus affecting its broad role in abiotic and biotic stress responses.</text>
</comment>
<comment type="subunit">
    <text evidence="2">Interacts with host transcription factor NAC069.</text>
</comment>
<comment type="subcellular location">
    <subcellularLocation>
        <location evidence="2">Secreted</location>
    </subcellularLocation>
    <subcellularLocation>
        <location evidence="2">Host endoplasmic reticulum membrane</location>
        <topology evidence="1">Single-pass type I membrane protein</topology>
    </subcellularLocation>
</comment>
<comment type="domain">
    <text evidence="5">The RxLR-dEER motif acts to carry the protein into the host cell cytoplasm through binding to cell surface phosphatidylinositol-3-phosphate.</text>
</comment>
<comment type="similarity">
    <text evidence="4">Belongs to the RxLR effector family.</text>
</comment>
<sequence length="97" mass="10656">MGPQHLLALVVVSILVAAGNAYYEIDDDSVTRALRPSVIADQEHAVHAIPATNFISKDEDHSKNEKKEIEIIRIAIFSLLVVGVFAIMALRCLPFCL</sequence>
<dbReference type="SMR" id="P0CU86"/>
<dbReference type="VEuPathDB" id="FungiDB:CCR75_006001"/>
<dbReference type="GO" id="GO:0005576">
    <property type="term" value="C:extracellular region"/>
    <property type="evidence" value="ECO:0007669"/>
    <property type="project" value="UniProtKB-SubCell"/>
</dbReference>
<dbReference type="GO" id="GO:0044167">
    <property type="term" value="C:host cell endoplasmic reticulum membrane"/>
    <property type="evidence" value="ECO:0007669"/>
    <property type="project" value="UniProtKB-SubCell"/>
</dbReference>
<dbReference type="GO" id="GO:0016020">
    <property type="term" value="C:membrane"/>
    <property type="evidence" value="ECO:0007669"/>
    <property type="project" value="UniProtKB-KW"/>
</dbReference>
<evidence type="ECO:0000255" key="1"/>
<evidence type="ECO:0000269" key="2">
    <source>
    </source>
</evidence>
<evidence type="ECO:0000303" key="3">
    <source>
    </source>
</evidence>
<evidence type="ECO:0000305" key="4"/>
<evidence type="ECO:0000305" key="5">
    <source>
    </source>
</evidence>
<keyword id="KW-1038">Host endoplasmic reticulum</keyword>
<keyword id="KW-1043">Host membrane</keyword>
<keyword id="KW-0472">Membrane</keyword>
<keyword id="KW-0964">Secreted</keyword>
<keyword id="KW-0732">Signal</keyword>
<keyword id="KW-0812">Transmembrane</keyword>
<keyword id="KW-1133">Transmembrane helix</keyword>
<accession>P0CU86</accession>